<protein>
    <recommendedName>
        <fullName>Zingipain-1</fullName>
        <ecNumber evidence="8">3.4.22.67</ecNumber>
    </recommendedName>
    <alternativeName>
        <fullName>Cysteine proteinase GP-I</fullName>
    </alternativeName>
</protein>
<reference key="1">
    <citation type="journal article" date="2000" name="Eur. J. Biochem.">
        <title>Amino-acid sequence and glycan structures of cysteine proteases with proline specificity from ginger rhizome Zingiber officinale.</title>
        <authorList>
            <person name="Choi K.H."/>
            <person name="Laursen R.A."/>
        </authorList>
    </citation>
    <scope>PROTEIN SEQUENCE</scope>
    <scope>FUNCTION</scope>
    <source>
        <tissue>Root</tissue>
    </source>
</reference>
<sequence length="221" mass="24244">DVLPDSIDWREKGAVVPVKNQGGCGSCWAFDAIAAVEGINQIVTGDLISLSEQQLVDCSTRNHGCEGGWPYRAFQYIINNGGINSEEHYPYTGTNGTCDTKENAHVVSIDSYRNVPSNDEKSLQKAVANQPVSVTMDAAGRDFQLYRNGIFTGSCNISANHYRTVGGRETENDKDYWTVKNSWGKNWGESGYIRVERNIAESSGKCGIAISPSYPIKEXXX</sequence>
<proteinExistence type="evidence at protein level"/>
<comment type="function">
    <text evidence="8">Cysteine proteinase with a high level of diversity in substrate specificity, an amino acid bearing a proline residue at the P2 position is preferred.</text>
</comment>
<comment type="catalytic activity">
    <reaction evidence="8">
        <text>Preferential cleavage of peptides with a proline residue at the P2 position.</text>
        <dbReference type="EC" id="3.4.22.67"/>
    </reaction>
</comment>
<comment type="similarity">
    <text evidence="6">Belongs to the peptidase C1 family.</text>
</comment>
<comment type="sequence caution" evidence="7">
    <conflict type="miscellaneous discrepancy" ref="1"/>
    <text>Contaminating sequence. May have been contaminated by a homologous protein.</text>
</comment>
<organism>
    <name type="scientific">Zingiber officinale</name>
    <name type="common">Ginger</name>
    <name type="synonym">Amomum zingiber</name>
    <dbReference type="NCBI Taxonomy" id="94328"/>
    <lineage>
        <taxon>Eukaryota</taxon>
        <taxon>Viridiplantae</taxon>
        <taxon>Streptophyta</taxon>
        <taxon>Embryophyta</taxon>
        <taxon>Tracheophyta</taxon>
        <taxon>Spermatophyta</taxon>
        <taxon>Magnoliopsida</taxon>
        <taxon>Liliopsida</taxon>
        <taxon>Zingiberales</taxon>
        <taxon>Zingiberaceae</taxon>
        <taxon>Zingiber</taxon>
    </lineage>
</organism>
<name>CPGP1_ZINOF</name>
<evidence type="ECO:0000250" key="1">
    <source>
        <dbReference type="UniProtKB" id="P07858"/>
    </source>
</evidence>
<evidence type="ECO:0000250" key="2">
    <source>
        <dbReference type="UniProtKB" id="P25250"/>
    </source>
</evidence>
<evidence type="ECO:0000255" key="3">
    <source>
        <dbReference type="PROSITE-ProRule" id="PRU00498"/>
    </source>
</evidence>
<evidence type="ECO:0000255" key="4">
    <source>
        <dbReference type="PROSITE-ProRule" id="PRU10088"/>
    </source>
</evidence>
<evidence type="ECO:0000255" key="5">
    <source>
        <dbReference type="PROSITE-ProRule" id="PRU10089"/>
    </source>
</evidence>
<evidence type="ECO:0000255" key="6">
    <source>
        <dbReference type="PROSITE-ProRule" id="PRU10090"/>
    </source>
</evidence>
<evidence type="ECO:0000305" key="7"/>
<evidence type="ECO:0000305" key="8">
    <source>
    </source>
</evidence>
<accession>P82473</accession>
<dbReference type="EC" id="3.4.22.67" evidence="8"/>
<dbReference type="PIR" id="A59040">
    <property type="entry name" value="A59040"/>
</dbReference>
<dbReference type="MEROPS" id="C01.017"/>
<dbReference type="GO" id="GO:0008234">
    <property type="term" value="F:cysteine-type peptidase activity"/>
    <property type="evidence" value="ECO:0007669"/>
    <property type="project" value="UniProtKB-KW"/>
</dbReference>
<dbReference type="GO" id="GO:0006508">
    <property type="term" value="P:proteolysis"/>
    <property type="evidence" value="ECO:0007669"/>
    <property type="project" value="UniProtKB-KW"/>
</dbReference>
<dbReference type="CDD" id="cd02248">
    <property type="entry name" value="Peptidase_C1A"/>
    <property type="match status" value="1"/>
</dbReference>
<dbReference type="FunFam" id="3.90.70.10:FF:000332">
    <property type="entry name" value="Cathepsin L1"/>
    <property type="match status" value="1"/>
</dbReference>
<dbReference type="Gene3D" id="3.90.70.10">
    <property type="entry name" value="Cysteine proteinases"/>
    <property type="match status" value="1"/>
</dbReference>
<dbReference type="InterPro" id="IPR038765">
    <property type="entry name" value="Papain-like_cys_pep_sf"/>
</dbReference>
<dbReference type="InterPro" id="IPR025661">
    <property type="entry name" value="Pept_asp_AS"/>
</dbReference>
<dbReference type="InterPro" id="IPR013128">
    <property type="entry name" value="Peptidase_C1A"/>
</dbReference>
<dbReference type="InterPro" id="IPR000668">
    <property type="entry name" value="Peptidase_C1A_C"/>
</dbReference>
<dbReference type="InterPro" id="IPR039417">
    <property type="entry name" value="Peptidase_C1A_papain-like"/>
</dbReference>
<dbReference type="PANTHER" id="PTHR12411">
    <property type="entry name" value="CYSTEINE PROTEASE FAMILY C1-RELATED"/>
    <property type="match status" value="1"/>
</dbReference>
<dbReference type="Pfam" id="PF00112">
    <property type="entry name" value="Peptidase_C1"/>
    <property type="match status" value="1"/>
</dbReference>
<dbReference type="SMART" id="SM00645">
    <property type="entry name" value="Pept_C1"/>
    <property type="match status" value="1"/>
</dbReference>
<dbReference type="SUPFAM" id="SSF54001">
    <property type="entry name" value="Cysteine proteinases"/>
    <property type="match status" value="1"/>
</dbReference>
<dbReference type="PROSITE" id="PS00640">
    <property type="entry name" value="THIOL_PROTEASE_ASN"/>
    <property type="match status" value="1"/>
</dbReference>
<keyword id="KW-0903">Direct protein sequencing</keyword>
<keyword id="KW-1015">Disulfide bond</keyword>
<keyword id="KW-0325">Glycoprotein</keyword>
<keyword id="KW-0378">Hydrolase</keyword>
<keyword id="KW-0645">Protease</keyword>
<keyword id="KW-0788">Thiol protease</keyword>
<feature type="chain" id="PRO_0000050568" description="Zingipain-1">
    <location>
        <begin position="1"/>
        <end position="221"/>
    </location>
</feature>
<feature type="active site" evidence="4">
    <location>
        <position position="27"/>
    </location>
</feature>
<feature type="active site" evidence="5">
    <location>
        <position position="161"/>
    </location>
</feature>
<feature type="active site" evidence="6">
    <location>
        <position position="181"/>
    </location>
</feature>
<feature type="glycosylation site" description="N-linked (GlcNAc...) asparagine" evidence="3">
    <location>
        <position position="95"/>
    </location>
</feature>
<feature type="glycosylation site" description="N-linked (GlcNAc...) asparagine" evidence="3">
    <location>
        <position position="156"/>
    </location>
</feature>
<feature type="disulfide bond" evidence="1">
    <location>
        <begin position="24"/>
        <end position="65"/>
    </location>
</feature>
<feature type="disulfide bond" evidence="2">
    <location>
        <begin position="58"/>
        <end position="98"/>
    </location>
</feature>
<feature type="disulfide bond" evidence="2">
    <location>
        <begin position="155"/>
        <end position="206"/>
    </location>
</feature>
<feature type="unsure residue" description="V or D">
    <location>
        <position position="2"/>
    </location>
</feature>